<accession>Q9LRH7</accession>
<sequence>MWKLKIGDGGKDRNIFSTNNFVGRQTWEFDPDAGTSQEKAQVEAARQHFYDNRFEVKACSDLLWRFQILKEKNFKQTIESVKIKDEEEISEENVAITLRRAVHHLSTLQSNDGHWPALNAGPLFYFPPLVFCMYVTGHLDSIFPYEYRKEILRYIYCHQNEDGGWGLHVEGHSIMFCTVLNYICMRILGEGPNGGKEDACARARKWIHDHGSVTHVSSWGKIWLSVLGIFDWCASNPMPPEFWMLPSFLLKHPAKMLCYCRLVYMPMSYLYGKRFVGPITPLILMLREELLTQPYEKVNWKKTRHLCAKEDLYYPHPLIQDLIWDSLYIFVEPLLTHWPFNKLLREKALQTVMKHIHYEDENSRYITIGCVEKVLCILACWVEDPNGDAFKKHLARLPDYLWVSEDGMTLHSFGSQTWDASLIIQALLATNLIEDVGPILTKAHEFIKKSQVRDNPSGDFKSMYRHISKGSWTFSDKDHGWQVSDCTAESLKCCLLLSMLPPEIVGEKMEPEMLYDSVNILLSLQGKKGGLPAWEPSEAVEWLELFNPIEFLEEIVVEREYVECTSSAIQALVLFKKLYPEHRKKEVENFIANAVRFLEYKQTSDGSWYGNWGICFTYGSWFALNGLVAAGKTYDNCAAIRKGVEFLLTTQREDGGWGESHLSSSKKIYVPLERSQSNIVQTSWAIMGLIHAGQMERDPTPLHRAVKLIINFQQEEGDWPQQELTGVFMKNCMLQYAMYRDIFPTWALAEYRRRILLASPAVAI</sequence>
<keyword id="KW-0413">Isomerase</keyword>
<keyword id="KW-0677">Repeat</keyword>
<organism>
    <name type="scientific">Pisum sativum</name>
    <name type="common">Garden pea</name>
    <name type="synonym">Lathyrus oleraceus</name>
    <dbReference type="NCBI Taxonomy" id="3888"/>
    <lineage>
        <taxon>Eukaryota</taxon>
        <taxon>Viridiplantae</taxon>
        <taxon>Streptophyta</taxon>
        <taxon>Embryophyta</taxon>
        <taxon>Tracheophyta</taxon>
        <taxon>Spermatophyta</taxon>
        <taxon>Magnoliopsida</taxon>
        <taxon>eudicotyledons</taxon>
        <taxon>Gunneridae</taxon>
        <taxon>Pentapetalae</taxon>
        <taxon>rosids</taxon>
        <taxon>fabids</taxon>
        <taxon>Fabales</taxon>
        <taxon>Fabaceae</taxon>
        <taxon>Papilionoideae</taxon>
        <taxon>50 kb inversion clade</taxon>
        <taxon>NPAAA clade</taxon>
        <taxon>Hologalegina</taxon>
        <taxon>IRL clade</taxon>
        <taxon>Fabeae</taxon>
        <taxon>Pisum</taxon>
    </lineage>
</organism>
<protein>
    <recommendedName>
        <fullName>Mixed-amyrin synthase</fullName>
        <ecNumber>5.4.99.39</ecNumber>
        <ecNumber>5.4.99.40</ecNumber>
    </recommendedName>
</protein>
<proteinExistence type="evidence at protein level"/>
<dbReference type="EC" id="5.4.99.39"/>
<dbReference type="EC" id="5.4.99.40"/>
<dbReference type="EMBL" id="AB034803">
    <property type="protein sequence ID" value="BAA97559.1"/>
    <property type="molecule type" value="mRNA"/>
</dbReference>
<dbReference type="SMR" id="Q9LRH7"/>
<dbReference type="KEGG" id="ag:BAA97559"/>
<dbReference type="BRENDA" id="5.4.99.40">
    <property type="organism ID" value="4872"/>
</dbReference>
<dbReference type="GO" id="GO:0005811">
    <property type="term" value="C:lipid droplet"/>
    <property type="evidence" value="ECO:0007669"/>
    <property type="project" value="InterPro"/>
</dbReference>
<dbReference type="GO" id="GO:0042561">
    <property type="term" value="F:alpha-amyrin synthase activity"/>
    <property type="evidence" value="ECO:0000314"/>
    <property type="project" value="UniProtKB"/>
</dbReference>
<dbReference type="GO" id="GO:0042300">
    <property type="term" value="F:beta-amyrin synthase activity"/>
    <property type="evidence" value="ECO:0000314"/>
    <property type="project" value="UniProtKB"/>
</dbReference>
<dbReference type="GO" id="GO:0019745">
    <property type="term" value="P:pentacyclic triterpenoid biosynthetic process"/>
    <property type="evidence" value="ECO:0000314"/>
    <property type="project" value="UniProtKB"/>
</dbReference>
<dbReference type="CDD" id="cd02892">
    <property type="entry name" value="SQCY_1"/>
    <property type="match status" value="1"/>
</dbReference>
<dbReference type="FunFam" id="1.50.10.20:FF:000011">
    <property type="entry name" value="Terpene cyclase/mutase family member"/>
    <property type="match status" value="1"/>
</dbReference>
<dbReference type="FunFam" id="1.50.10.20:FF:000064">
    <property type="entry name" value="Uncharacterized protein"/>
    <property type="match status" value="1"/>
</dbReference>
<dbReference type="Gene3D" id="1.50.10.20">
    <property type="match status" value="2"/>
</dbReference>
<dbReference type="InterPro" id="IPR032696">
    <property type="entry name" value="SQ_cyclase_C"/>
</dbReference>
<dbReference type="InterPro" id="IPR032697">
    <property type="entry name" value="SQ_cyclase_N"/>
</dbReference>
<dbReference type="InterPro" id="IPR018333">
    <property type="entry name" value="Squalene_cyclase"/>
</dbReference>
<dbReference type="InterPro" id="IPR002365">
    <property type="entry name" value="Terpene_synthase_CS"/>
</dbReference>
<dbReference type="InterPro" id="IPR008930">
    <property type="entry name" value="Terpenoid_cyclase/PrenylTrfase"/>
</dbReference>
<dbReference type="NCBIfam" id="TIGR01787">
    <property type="entry name" value="squalene_cyclas"/>
    <property type="match status" value="1"/>
</dbReference>
<dbReference type="PANTHER" id="PTHR11764:SF58">
    <property type="entry name" value="BETA-AMYRIN SYNTHASE-RELATED"/>
    <property type="match status" value="1"/>
</dbReference>
<dbReference type="PANTHER" id="PTHR11764">
    <property type="entry name" value="TERPENE CYCLASE/MUTASE FAMILY MEMBER"/>
    <property type="match status" value="1"/>
</dbReference>
<dbReference type="Pfam" id="PF13243">
    <property type="entry name" value="SQHop_cyclase_C"/>
    <property type="match status" value="1"/>
</dbReference>
<dbReference type="Pfam" id="PF13249">
    <property type="entry name" value="SQHop_cyclase_N"/>
    <property type="match status" value="1"/>
</dbReference>
<dbReference type="SFLD" id="SFLDG01016">
    <property type="entry name" value="Prenyltransferase_Like_2"/>
    <property type="match status" value="1"/>
</dbReference>
<dbReference type="SUPFAM" id="SSF48239">
    <property type="entry name" value="Terpenoid cyclases/Protein prenyltransferases"/>
    <property type="match status" value="2"/>
</dbReference>
<dbReference type="PROSITE" id="PS01074">
    <property type="entry name" value="TERPENE_SYNTHASES"/>
    <property type="match status" value="1"/>
</dbReference>
<feature type="chain" id="PRO_0000413970" description="Mixed-amyrin synthase">
    <location>
        <begin position="1"/>
        <end position="764"/>
    </location>
</feature>
<feature type="repeat" description="PFTB 1">
    <location>
        <begin position="148"/>
        <end position="189"/>
    </location>
</feature>
<feature type="repeat" description="PFTB 2">
    <location>
        <begin position="514"/>
        <end position="556"/>
    </location>
</feature>
<feature type="repeat" description="PFTB 3">
    <location>
        <begin position="591"/>
        <end position="631"/>
    </location>
</feature>
<feature type="repeat" description="PFTB 4">
    <location>
        <begin position="640"/>
        <end position="681"/>
    </location>
</feature>
<feature type="active site" description="Proton donor" evidence="1">
    <location>
        <position position="485"/>
    </location>
</feature>
<reference key="1">
    <citation type="journal article" date="2000" name="Eur. J. Biochem.">
        <title>Molecular cloning and functional expression of triterpene synthases from pea (Pisum sativum) new alpha-amyrin-producing enzyme is a multifunctional triterpene synthase.</title>
        <authorList>
            <person name="Morita M."/>
            <person name="Shibuya M."/>
            <person name="Kushiro T."/>
            <person name="Masuda K."/>
            <person name="Ebizuka Y."/>
        </authorList>
    </citation>
    <scope>NUCLEOTIDE SEQUENCE [MRNA]</scope>
    <scope>FUNCTION</scope>
    <scope>CATALYTIC ACTIVITY</scope>
</reference>
<evidence type="ECO:0000250" key="1">
    <source>
        <dbReference type="UniProtKB" id="P48449"/>
    </source>
</evidence>
<evidence type="ECO:0000269" key="2">
    <source>
    </source>
</evidence>
<evidence type="ECO:0000305" key="3"/>
<gene>
    <name type="primary">OSCPSM</name>
</gene>
<comment type="function">
    <text evidence="2">Multifunctional oxidosqualene cyclase producing alpha- and beta-amyrin and several other minor triterpenes.</text>
</comment>
<comment type="catalytic activity">
    <reaction evidence="2">
        <text>(S)-2,3-epoxysqualene = beta-amyrin</text>
        <dbReference type="Rhea" id="RHEA:31007"/>
        <dbReference type="ChEBI" id="CHEBI:10352"/>
        <dbReference type="ChEBI" id="CHEBI:15441"/>
        <dbReference type="EC" id="5.4.99.39"/>
    </reaction>
</comment>
<comment type="catalytic activity">
    <reaction evidence="2">
        <text>(S)-2,3-epoxysqualene = alpha-amyrin</text>
        <dbReference type="Rhea" id="RHEA:31387"/>
        <dbReference type="ChEBI" id="CHEBI:10213"/>
        <dbReference type="ChEBI" id="CHEBI:15441"/>
        <dbReference type="EC" id="5.4.99.40"/>
    </reaction>
</comment>
<comment type="similarity">
    <text evidence="3">Belongs to the terpene cyclase/mutase family.</text>
</comment>
<name>ABAMS_PEA</name>